<comment type="function">
    <text evidence="1">Multidrug efflux pump that functions probably as a Na(+)/drug antiporter.</text>
</comment>
<comment type="subcellular location">
    <subcellularLocation>
        <location evidence="1">Cell inner membrane</location>
        <topology evidence="1">Multi-pass membrane protein</topology>
    </subcellularLocation>
</comment>
<comment type="similarity">
    <text evidence="1">Belongs to the multi antimicrobial extrusion (MATE) (TC 2.A.66.1) family. MdtK subfamily.</text>
</comment>
<name>MDTK_ECO24</name>
<organism>
    <name type="scientific">Escherichia coli O139:H28 (strain E24377A / ETEC)</name>
    <dbReference type="NCBI Taxonomy" id="331111"/>
    <lineage>
        <taxon>Bacteria</taxon>
        <taxon>Pseudomonadati</taxon>
        <taxon>Pseudomonadota</taxon>
        <taxon>Gammaproteobacteria</taxon>
        <taxon>Enterobacterales</taxon>
        <taxon>Enterobacteriaceae</taxon>
        <taxon>Escherichia</taxon>
    </lineage>
</organism>
<proteinExistence type="inferred from homology"/>
<feature type="chain" id="PRO_1000060795" description="Multidrug resistance protein MdtK">
    <location>
        <begin position="1"/>
        <end position="457"/>
    </location>
</feature>
<feature type="transmembrane region" description="Helical" evidence="1">
    <location>
        <begin position="11"/>
        <end position="31"/>
    </location>
</feature>
<feature type="transmembrane region" description="Helical" evidence="1">
    <location>
        <begin position="53"/>
        <end position="73"/>
    </location>
</feature>
<feature type="transmembrane region" description="Helical" evidence="1">
    <location>
        <begin position="93"/>
        <end position="113"/>
    </location>
</feature>
<feature type="transmembrane region" description="Helical" evidence="1">
    <location>
        <begin position="127"/>
        <end position="147"/>
    </location>
</feature>
<feature type="transmembrane region" description="Helical" evidence="1">
    <location>
        <begin position="160"/>
        <end position="180"/>
    </location>
</feature>
<feature type="transmembrane region" description="Helical" evidence="1">
    <location>
        <begin position="189"/>
        <end position="209"/>
    </location>
</feature>
<feature type="transmembrane region" description="Helical" evidence="1">
    <location>
        <begin position="243"/>
        <end position="263"/>
    </location>
</feature>
<feature type="transmembrane region" description="Helical" evidence="1">
    <location>
        <begin position="276"/>
        <end position="296"/>
    </location>
</feature>
<feature type="transmembrane region" description="Helical" evidence="1">
    <location>
        <begin position="314"/>
        <end position="334"/>
    </location>
</feature>
<feature type="transmembrane region" description="Helical" evidence="1">
    <location>
        <begin position="350"/>
        <end position="370"/>
    </location>
</feature>
<feature type="transmembrane region" description="Helical" evidence="1">
    <location>
        <begin position="387"/>
        <end position="407"/>
    </location>
</feature>
<feature type="transmembrane region" description="Helical" evidence="1">
    <location>
        <begin position="418"/>
        <end position="438"/>
    </location>
</feature>
<evidence type="ECO:0000255" key="1">
    <source>
        <dbReference type="HAMAP-Rule" id="MF_00400"/>
    </source>
</evidence>
<reference key="1">
    <citation type="journal article" date="2008" name="J. Bacteriol.">
        <title>The pangenome structure of Escherichia coli: comparative genomic analysis of E. coli commensal and pathogenic isolates.</title>
        <authorList>
            <person name="Rasko D.A."/>
            <person name="Rosovitz M.J."/>
            <person name="Myers G.S.A."/>
            <person name="Mongodin E.F."/>
            <person name="Fricke W.F."/>
            <person name="Gajer P."/>
            <person name="Crabtree J."/>
            <person name="Sebaihia M."/>
            <person name="Thomson N.R."/>
            <person name="Chaudhuri R."/>
            <person name="Henderson I.R."/>
            <person name="Sperandio V."/>
            <person name="Ravel J."/>
        </authorList>
    </citation>
    <scope>NUCLEOTIDE SEQUENCE [LARGE SCALE GENOMIC DNA]</scope>
    <source>
        <strain>E24377A / ETEC</strain>
    </source>
</reference>
<gene>
    <name evidence="1" type="primary">mdtK</name>
    <name type="ordered locus">EcE24377A_1877</name>
</gene>
<accession>A7ZMC9</accession>
<protein>
    <recommendedName>
        <fullName evidence="1">Multidrug resistance protein MdtK</fullName>
    </recommendedName>
    <alternativeName>
        <fullName evidence="1">Multidrug-efflux transporter</fullName>
    </alternativeName>
</protein>
<sequence>MQKYISEARLLLALAIPVILAQIAQTAMGFVDTVMAGGYSATDMAAVAIGTSIWLPAILFGHGLLLALTPVIAQLNGSGRRERIAHQVRQGFWLAGFVSVLIMLVLWNAGYIIRSMENIDPALADKAVGYLRALLWGAPGYLFFQVARNQCEGLAKTKPGMVMGFIGLLVNIPVNYIFIYGHFGMPELGGVGCGVATAAVYWVMFLAMVSYIKRARSMRDIRNEKGTAKPDPAVMKRLIQLGLPIALALFFEVTLFAVVALLVSPLGIVDVAGHQIALNFSSLMFVLPMSLAAAVTIRVGYRLGQGSTLDAQTAARTGLMVGVCMATLTAIFTVSLREQIALLYNDNPEVVTLAAHLMLLAAVYQISDSIQVIGSGILRGYKDTRSIFYITFTAYWVLGLPSGYILALTDLVVEPMGPAGFWIGFIIGLTSAAIMMMLRMRFLQRLPSVIILQRASR</sequence>
<keyword id="KW-0050">Antiport</keyword>
<keyword id="KW-0997">Cell inner membrane</keyword>
<keyword id="KW-1003">Cell membrane</keyword>
<keyword id="KW-0406">Ion transport</keyword>
<keyword id="KW-0472">Membrane</keyword>
<keyword id="KW-1185">Reference proteome</keyword>
<keyword id="KW-0915">Sodium</keyword>
<keyword id="KW-0739">Sodium transport</keyword>
<keyword id="KW-0812">Transmembrane</keyword>
<keyword id="KW-1133">Transmembrane helix</keyword>
<keyword id="KW-0813">Transport</keyword>
<dbReference type="EMBL" id="CP000800">
    <property type="protein sequence ID" value="ABV16937.1"/>
    <property type="molecule type" value="Genomic_DNA"/>
</dbReference>
<dbReference type="RefSeq" id="WP_001174942.1">
    <property type="nucleotide sequence ID" value="NC_009801.1"/>
</dbReference>
<dbReference type="SMR" id="A7ZMC9"/>
<dbReference type="GeneID" id="75204509"/>
<dbReference type="KEGG" id="ecw:EcE24377A_1877"/>
<dbReference type="HOGENOM" id="CLU_012893_6_0_6"/>
<dbReference type="Proteomes" id="UP000001122">
    <property type="component" value="Chromosome"/>
</dbReference>
<dbReference type="GO" id="GO:0005886">
    <property type="term" value="C:plasma membrane"/>
    <property type="evidence" value="ECO:0007669"/>
    <property type="project" value="UniProtKB-SubCell"/>
</dbReference>
<dbReference type="GO" id="GO:0015297">
    <property type="term" value="F:antiporter activity"/>
    <property type="evidence" value="ECO:0007669"/>
    <property type="project" value="UniProtKB-UniRule"/>
</dbReference>
<dbReference type="GO" id="GO:0042910">
    <property type="term" value="F:xenobiotic transmembrane transporter activity"/>
    <property type="evidence" value="ECO:0007669"/>
    <property type="project" value="UniProtKB-UniRule"/>
</dbReference>
<dbReference type="GO" id="GO:0006814">
    <property type="term" value="P:sodium ion transport"/>
    <property type="evidence" value="ECO:0007669"/>
    <property type="project" value="UniProtKB-UniRule"/>
</dbReference>
<dbReference type="GO" id="GO:0006855">
    <property type="term" value="P:xenobiotic transmembrane transport"/>
    <property type="evidence" value="ECO:0007669"/>
    <property type="project" value="UniProtKB-UniRule"/>
</dbReference>
<dbReference type="CDD" id="cd13131">
    <property type="entry name" value="MATE_NorM_like"/>
    <property type="match status" value="1"/>
</dbReference>
<dbReference type="HAMAP" id="MF_00400">
    <property type="entry name" value="MdtK"/>
    <property type="match status" value="1"/>
</dbReference>
<dbReference type="InterPro" id="IPR002528">
    <property type="entry name" value="MATE_fam"/>
</dbReference>
<dbReference type="InterPro" id="IPR050222">
    <property type="entry name" value="MATE_MdtK"/>
</dbReference>
<dbReference type="InterPro" id="IPR048279">
    <property type="entry name" value="MdtK-like"/>
</dbReference>
<dbReference type="InterPro" id="IPR022913">
    <property type="entry name" value="Multidrug-R_MdtK"/>
</dbReference>
<dbReference type="NCBIfam" id="TIGR00797">
    <property type="entry name" value="matE"/>
    <property type="match status" value="1"/>
</dbReference>
<dbReference type="PANTHER" id="PTHR43298:SF2">
    <property type="entry name" value="FMN_FAD EXPORTER YEEO-RELATED"/>
    <property type="match status" value="1"/>
</dbReference>
<dbReference type="PANTHER" id="PTHR43298">
    <property type="entry name" value="MULTIDRUG RESISTANCE PROTEIN NORM-RELATED"/>
    <property type="match status" value="1"/>
</dbReference>
<dbReference type="Pfam" id="PF01554">
    <property type="entry name" value="MatE"/>
    <property type="match status" value="2"/>
</dbReference>
<dbReference type="PIRSF" id="PIRSF006603">
    <property type="entry name" value="DinF"/>
    <property type="match status" value="1"/>
</dbReference>